<keyword id="KW-0342">GTP-binding</keyword>
<keyword id="KW-0378">Hydrolase</keyword>
<keyword id="KW-0479">Metal-binding</keyword>
<keyword id="KW-0547">Nucleotide-binding</keyword>
<keyword id="KW-1185">Reference proteome</keyword>
<keyword id="KW-0686">Riboflavin biosynthesis</keyword>
<keyword id="KW-0862">Zinc</keyword>
<name>RIBA_BUCAI</name>
<feature type="chain" id="PRO_0000151750" description="GTP cyclohydrolase-2">
    <location>
        <begin position="1"/>
        <end position="194"/>
    </location>
</feature>
<feature type="active site" description="Proton acceptor" evidence="1">
    <location>
        <position position="124"/>
    </location>
</feature>
<feature type="active site" description="Nucleophile" evidence="1">
    <location>
        <position position="126"/>
    </location>
</feature>
<feature type="binding site" evidence="1">
    <location>
        <begin position="47"/>
        <end position="51"/>
    </location>
    <ligand>
        <name>GTP</name>
        <dbReference type="ChEBI" id="CHEBI:37565"/>
    </ligand>
</feature>
<feature type="binding site" evidence="1">
    <location>
        <position position="52"/>
    </location>
    <ligand>
        <name>Zn(2+)</name>
        <dbReference type="ChEBI" id="CHEBI:29105"/>
        <note>catalytic</note>
    </ligand>
</feature>
<feature type="binding site" evidence="1">
    <location>
        <position position="63"/>
    </location>
    <ligand>
        <name>Zn(2+)</name>
        <dbReference type="ChEBI" id="CHEBI:29105"/>
        <note>catalytic</note>
    </ligand>
</feature>
<feature type="binding site" evidence="1">
    <location>
        <position position="65"/>
    </location>
    <ligand>
        <name>Zn(2+)</name>
        <dbReference type="ChEBI" id="CHEBI:29105"/>
        <note>catalytic</note>
    </ligand>
</feature>
<feature type="binding site" evidence="1">
    <location>
        <position position="68"/>
    </location>
    <ligand>
        <name>GTP</name>
        <dbReference type="ChEBI" id="CHEBI:37565"/>
    </ligand>
</feature>
<feature type="binding site" evidence="1">
    <location>
        <begin position="90"/>
        <end position="92"/>
    </location>
    <ligand>
        <name>GTP</name>
        <dbReference type="ChEBI" id="CHEBI:37565"/>
    </ligand>
</feature>
<feature type="binding site" evidence="1">
    <location>
        <position position="112"/>
    </location>
    <ligand>
        <name>GTP</name>
        <dbReference type="ChEBI" id="CHEBI:37565"/>
    </ligand>
</feature>
<feature type="binding site" evidence="1">
    <location>
        <position position="147"/>
    </location>
    <ligand>
        <name>GTP</name>
        <dbReference type="ChEBI" id="CHEBI:37565"/>
    </ligand>
</feature>
<feature type="binding site" evidence="1">
    <location>
        <position position="152"/>
    </location>
    <ligand>
        <name>GTP</name>
        <dbReference type="ChEBI" id="CHEBI:37565"/>
    </ligand>
</feature>
<evidence type="ECO:0000255" key="1">
    <source>
        <dbReference type="HAMAP-Rule" id="MF_00179"/>
    </source>
</evidence>
<accession>P57359</accession>
<proteinExistence type="inferred from homology"/>
<dbReference type="EC" id="3.5.4.25" evidence="1"/>
<dbReference type="EMBL" id="BA000003">
    <property type="protein sequence ID" value="BAB12981.1"/>
    <property type="molecule type" value="Genomic_DNA"/>
</dbReference>
<dbReference type="RefSeq" id="NP_240095.1">
    <property type="nucleotide sequence ID" value="NC_002528.1"/>
</dbReference>
<dbReference type="RefSeq" id="WP_009874225.1">
    <property type="nucleotide sequence ID" value="NZ_AP036055.1"/>
</dbReference>
<dbReference type="SMR" id="P57359"/>
<dbReference type="STRING" id="563178.BUAP5A_266"/>
<dbReference type="EnsemblBacteria" id="BAB12981">
    <property type="protein sequence ID" value="BAB12981"/>
    <property type="gene ID" value="BAB12981"/>
</dbReference>
<dbReference type="KEGG" id="buc:BU271"/>
<dbReference type="PATRIC" id="fig|107806.10.peg.281"/>
<dbReference type="eggNOG" id="COG0807">
    <property type="taxonomic scope" value="Bacteria"/>
</dbReference>
<dbReference type="HOGENOM" id="CLU_020273_2_1_6"/>
<dbReference type="UniPathway" id="UPA00275">
    <property type="reaction ID" value="UER00400"/>
</dbReference>
<dbReference type="Proteomes" id="UP000001806">
    <property type="component" value="Chromosome"/>
</dbReference>
<dbReference type="GO" id="GO:0005829">
    <property type="term" value="C:cytosol"/>
    <property type="evidence" value="ECO:0007669"/>
    <property type="project" value="TreeGrafter"/>
</dbReference>
<dbReference type="GO" id="GO:0005525">
    <property type="term" value="F:GTP binding"/>
    <property type="evidence" value="ECO:0007669"/>
    <property type="project" value="UniProtKB-KW"/>
</dbReference>
<dbReference type="GO" id="GO:0003935">
    <property type="term" value="F:GTP cyclohydrolase II activity"/>
    <property type="evidence" value="ECO:0007669"/>
    <property type="project" value="UniProtKB-UniRule"/>
</dbReference>
<dbReference type="GO" id="GO:0008270">
    <property type="term" value="F:zinc ion binding"/>
    <property type="evidence" value="ECO:0007669"/>
    <property type="project" value="UniProtKB-UniRule"/>
</dbReference>
<dbReference type="GO" id="GO:0009231">
    <property type="term" value="P:riboflavin biosynthetic process"/>
    <property type="evidence" value="ECO:0007669"/>
    <property type="project" value="UniProtKB-UniRule"/>
</dbReference>
<dbReference type="CDD" id="cd00641">
    <property type="entry name" value="GTP_cyclohydro2"/>
    <property type="match status" value="1"/>
</dbReference>
<dbReference type="FunFam" id="3.40.50.10990:FF:000002">
    <property type="entry name" value="GTP cyclohydrolase-2"/>
    <property type="match status" value="1"/>
</dbReference>
<dbReference type="Gene3D" id="3.40.50.10990">
    <property type="entry name" value="GTP cyclohydrolase II"/>
    <property type="match status" value="1"/>
</dbReference>
<dbReference type="HAMAP" id="MF_00179">
    <property type="entry name" value="RibA"/>
    <property type="match status" value="1"/>
</dbReference>
<dbReference type="InterPro" id="IPR032677">
    <property type="entry name" value="GTP_cyclohydro_II"/>
</dbReference>
<dbReference type="InterPro" id="IPR000926">
    <property type="entry name" value="RibA"/>
</dbReference>
<dbReference type="InterPro" id="IPR036144">
    <property type="entry name" value="RibA-like_sf"/>
</dbReference>
<dbReference type="NCBIfam" id="NF001591">
    <property type="entry name" value="PRK00393.1"/>
    <property type="match status" value="1"/>
</dbReference>
<dbReference type="NCBIfam" id="TIGR00505">
    <property type="entry name" value="ribA"/>
    <property type="match status" value="1"/>
</dbReference>
<dbReference type="PANTHER" id="PTHR21327:SF18">
    <property type="entry name" value="3,4-DIHYDROXY-2-BUTANONE 4-PHOSPHATE SYNTHASE"/>
    <property type="match status" value="1"/>
</dbReference>
<dbReference type="PANTHER" id="PTHR21327">
    <property type="entry name" value="GTP CYCLOHYDROLASE II-RELATED"/>
    <property type="match status" value="1"/>
</dbReference>
<dbReference type="Pfam" id="PF00925">
    <property type="entry name" value="GTP_cyclohydro2"/>
    <property type="match status" value="1"/>
</dbReference>
<dbReference type="SUPFAM" id="SSF142695">
    <property type="entry name" value="RibA-like"/>
    <property type="match status" value="1"/>
</dbReference>
<organism>
    <name type="scientific">Buchnera aphidicola subsp. Acyrthosiphon pisum (strain APS)</name>
    <name type="common">Acyrthosiphon pisum symbiotic bacterium</name>
    <dbReference type="NCBI Taxonomy" id="107806"/>
    <lineage>
        <taxon>Bacteria</taxon>
        <taxon>Pseudomonadati</taxon>
        <taxon>Pseudomonadota</taxon>
        <taxon>Gammaproteobacteria</taxon>
        <taxon>Enterobacterales</taxon>
        <taxon>Erwiniaceae</taxon>
        <taxon>Buchnera</taxon>
    </lineage>
</organism>
<sequence length="194" mass="21893">MQLIEKAMLPTPWGNFLIFGFEEKKNGKNHVALVYGDIKTNTPTLSRVHSECLTGDAFFSLRCDCGSQLEMSMKRISQEGSGVLIYHRQEGRNIGLLNKIKAYALQDRGLDTVQANQKLGFSADERDFSLCADIFNILNIKKIRLLTNNPFKVQMLSDAGINIVERVPLIVKKNPKNAYYLKTKAEKMGHLLSE</sequence>
<reference key="1">
    <citation type="journal article" date="2000" name="Nature">
        <title>Genome sequence of the endocellular bacterial symbiont of aphids Buchnera sp. APS.</title>
        <authorList>
            <person name="Shigenobu S."/>
            <person name="Watanabe H."/>
            <person name="Hattori M."/>
            <person name="Sakaki Y."/>
            <person name="Ishikawa H."/>
        </authorList>
    </citation>
    <scope>NUCLEOTIDE SEQUENCE [LARGE SCALE GENOMIC DNA]</scope>
    <source>
        <strain>APS</strain>
    </source>
</reference>
<comment type="function">
    <text evidence="1">Catalyzes the conversion of GTP to 2,5-diamino-6-ribosylamino-4(3H)-pyrimidinone 5'-phosphate (DARP), formate and pyrophosphate.</text>
</comment>
<comment type="catalytic activity">
    <reaction evidence="1">
        <text>GTP + 4 H2O = 2,5-diamino-6-hydroxy-4-(5-phosphoribosylamino)-pyrimidine + formate + 2 phosphate + 3 H(+)</text>
        <dbReference type="Rhea" id="RHEA:23704"/>
        <dbReference type="ChEBI" id="CHEBI:15377"/>
        <dbReference type="ChEBI" id="CHEBI:15378"/>
        <dbReference type="ChEBI" id="CHEBI:15740"/>
        <dbReference type="ChEBI" id="CHEBI:37565"/>
        <dbReference type="ChEBI" id="CHEBI:43474"/>
        <dbReference type="ChEBI" id="CHEBI:58614"/>
        <dbReference type="EC" id="3.5.4.25"/>
    </reaction>
</comment>
<comment type="cofactor">
    <cofactor evidence="1">
        <name>Zn(2+)</name>
        <dbReference type="ChEBI" id="CHEBI:29105"/>
    </cofactor>
    <text evidence="1">Binds 1 zinc ion per subunit.</text>
</comment>
<comment type="pathway">
    <text evidence="1">Cofactor biosynthesis; riboflavin biosynthesis; 5-amino-6-(D-ribitylamino)uracil from GTP: step 1/4.</text>
</comment>
<comment type="subunit">
    <text evidence="1">Homodimer.</text>
</comment>
<comment type="similarity">
    <text evidence="1">Belongs to the GTP cyclohydrolase II family.</text>
</comment>
<protein>
    <recommendedName>
        <fullName evidence="1">GTP cyclohydrolase-2</fullName>
        <ecNumber evidence="1">3.5.4.25</ecNumber>
    </recommendedName>
    <alternativeName>
        <fullName evidence="1">GTP cyclohydrolase II</fullName>
    </alternativeName>
</protein>
<gene>
    <name evidence="1" type="primary">ribA</name>
    <name type="ordered locus">BU271</name>
</gene>